<sequence>GRSVVEFGDMVCKRQQSAVSSAGSEKPSGKEENVHSPEDKRVTKSKEKSKHLRTRTGRKVKSDVTDRFRKKEQSSESSEGEKKQGRQRTGTRGKKSTDLKEEKVKREREYESSSDGTEKLPEGEEIGLFSKGVKQNKNDTTDEAKKGKKWKDKSCEKKEELSDSVDRLPVKGESCDSSEDKKTRNRVSLREKKQFSLPAKSSGKRPECSSSDTERSVKGECCDSTDKRVKRIDLRERRSSNSKRSTKEVKSGSSSSDAEGSSEDAKKQKKQRMSAKKKNSNTKERKRKSLRATTTKRKQADITSSSSDIGDDDQNSAGEESSDEQKIKPVTENLVLPSHTGFCQSSGDEAFSKSVPATVDDDDDDNDPENRIAKKMLLEEIKANLSSDEDGSSDDEPKEGEKKRIGKQSEETPGDDGSNQVNSESDSDSEESKKPRYRHRLLRHKLSLSDGESGGEKKTKPKEHKETKGRNRRKVSSEDSEDTDFQESGVSEEVSESEDEQRPRTRSAKKAELEENQRSYKQKKKRR</sequence>
<gene>
    <name type="primary">Atrx</name>
</gene>
<comment type="function">
    <text evidence="2">Involved in transcriptional regulation and chromatin remodeling. Facilitates DNA replication in multiple cellular environments and is required for efficient replication of a subset of genomic loci. Binds to DNA tandem repeat sequences in both telomeres and euchromatin and in vitro binds DNA quadruplex structures. May help stabilizing G-rich regions into regular chromatin structures by remodeling G4 DNA and incorporating H3.3-containing nucleosomes. Catalytic component of the chromatin remodeling complex ATRX:DAXX which has ATP-dependent DNA translocase activity and catalyzes the replication-independent deposition of histone H3.3 in pericentric DNA repeats outside S-phase and telomeres, and the in vitro remodeling of H3.3-containing nucleosomes. Its heterochromatin targeting is proposed to involve a combinatorial readout of histone H3 modifications (specifically methylation states of H3K9 and H3K4) and association with CBX5. Involved in maintaining telomere structural integrity in embryonic stem cells probably implying recruitment of CBX5 to telomeres. May be involved in transcriptional regulation of telomeric repeat-containing RNA (TERRA). Acts as a negative regulator of chromatin incorporation of transcriptionally repressive histone MACROH2A1, particularily at telomeres. Participates in the allele-specific gene expression at the imprinted IGF2/H19 gene locus. On the maternal allele, required for the chromatin occupancy of SMC1 and CTCTF within the H19 imprinting control region (ICR) and involved in esatblishment of histone tails modifications in the ICR. Binds to zinc-finger coding genes with atypical chromatin signatures and regulates its H3K9me3 levels. Forms a complex with ZNF274, TRIM28 and SETDB1 to facilitate the deposition and maintenance of H3K9me3 at the 3' exons of zinc-finger genes (By similarity).</text>
</comment>
<comment type="catalytic activity">
    <reaction>
        <text>ATP + H2O = ADP + phosphate + H(+)</text>
        <dbReference type="Rhea" id="RHEA:13065"/>
        <dbReference type="ChEBI" id="CHEBI:15377"/>
        <dbReference type="ChEBI" id="CHEBI:15378"/>
        <dbReference type="ChEBI" id="CHEBI:30616"/>
        <dbReference type="ChEBI" id="CHEBI:43474"/>
        <dbReference type="ChEBI" id="CHEBI:456216"/>
        <dbReference type="EC" id="3.6.4.12"/>
    </reaction>
</comment>
<comment type="subunit">
    <text evidence="2">Interacts with DAXX to form the chromatin remodeling complex ATRX:DAXX. Probably binds EZH2. Binds annexin V in a calcium and phosphatidylcholine/phosphatidylserine-dependent manner. Interacts directly with CBX5 via the PxVxL motif. Interacts with RAD50, MRE11 and NBN; indicative for an association with the MRN complex. Interacts with histone MACROH2A1. Interacts with histone H3 peptides methylated at 'Lys-10' with preferences H3K9me3 &gt; H3K9me2 &gt; H3K9me1. Interacts with histone H3 peptides unmethylated at 'Lys-5' (H3K4me0). Interacts with MECP2, SMC1 and SMC3. Interacts with SETDB1, TRIM28 and ZNF274 (By similarity).</text>
</comment>
<comment type="subcellular location">
    <subcellularLocation>
        <location evidence="1">Nucleus</location>
    </subcellularLocation>
    <subcellularLocation>
        <location evidence="1">Chromosome</location>
        <location evidence="1">Telomere</location>
    </subcellularLocation>
    <subcellularLocation>
        <location evidence="1">Nucleus</location>
        <location evidence="1">PML body</location>
    </subcellularLocation>
    <text evidence="1">Associated with pericentromeric heterochromatin during interphase and mitosis, probably by interacting with CBX5/HP1 alpha. Colocalizes with histone H3.3, DAXX, HIRA and ASF1A at PML-nuclear bodies (By similarity).</text>
</comment>
<comment type="domain">
    <text evidence="1">The ADD domain predominantly interacts with histone H3 trimethylated at 'Lys-10'(H3K9me3) (and to a lesser extent H3 mono- or dimethylated at 'Lys-10') and simultaneously to histone H3 unmethylated at 'Lys-5' (H3K4me0). The interaction with H3K9me3 is disrupted by the presence of H3K4me3 suggesting a readout of the combined histone H3 methylation state (By similarity).</text>
</comment>
<comment type="domain">
    <text>Contains one Pro-Xaa-Val-Xaa-Leu (PxVxL) motif, which is required for interaction with chromoshadow domains. This motif requires additional residues -7, -6, +4 and +5 of the central Val which contact the chromoshadow domain.</text>
</comment>
<comment type="PTM">
    <text evidence="1">Citrullinated by PADI4.</text>
</comment>
<comment type="similarity">
    <text evidence="5">Belongs to the SNF2/RAD54 helicase family.</text>
</comment>
<accession>P70486</accession>
<organism>
    <name type="scientific">Rattus norvegicus</name>
    <name type="common">Rat</name>
    <dbReference type="NCBI Taxonomy" id="10116"/>
    <lineage>
        <taxon>Eukaryota</taxon>
        <taxon>Metazoa</taxon>
        <taxon>Chordata</taxon>
        <taxon>Craniata</taxon>
        <taxon>Vertebrata</taxon>
        <taxon>Euteleostomi</taxon>
        <taxon>Mammalia</taxon>
        <taxon>Eutheria</taxon>
        <taxon>Euarchontoglires</taxon>
        <taxon>Glires</taxon>
        <taxon>Rodentia</taxon>
        <taxon>Myomorpha</taxon>
        <taxon>Muroidea</taxon>
        <taxon>Muridae</taxon>
        <taxon>Murinae</taxon>
        <taxon>Rattus</taxon>
    </lineage>
</organism>
<feature type="chain" id="PRO_0000074306" description="Transcriptional regulator ATRX">
    <location>
        <begin position="1" status="less than"/>
        <end position="527" status="greater than"/>
    </location>
</feature>
<feature type="region of interest" description="Disordered" evidence="4">
    <location>
        <begin position="1"/>
        <end position="527"/>
    </location>
</feature>
<feature type="region of interest" description="Interaction with DAXX" evidence="1">
    <location>
        <begin position="290"/>
        <end position="427"/>
    </location>
</feature>
<feature type="compositionally biased region" description="Polar residues" evidence="4">
    <location>
        <begin position="14"/>
        <end position="23"/>
    </location>
</feature>
<feature type="compositionally biased region" description="Basic and acidic residues" evidence="4">
    <location>
        <begin position="27"/>
        <end position="46"/>
    </location>
</feature>
<feature type="compositionally biased region" description="Basic residues" evidence="4">
    <location>
        <begin position="47"/>
        <end position="59"/>
    </location>
</feature>
<feature type="compositionally biased region" description="Basic and acidic residues" evidence="4">
    <location>
        <begin position="60"/>
        <end position="84"/>
    </location>
</feature>
<feature type="compositionally biased region" description="Basic residues" evidence="4">
    <location>
        <begin position="85"/>
        <end position="94"/>
    </location>
</feature>
<feature type="compositionally biased region" description="Basic and acidic residues" evidence="4">
    <location>
        <begin position="95"/>
        <end position="122"/>
    </location>
</feature>
<feature type="compositionally biased region" description="Basic and acidic residues" evidence="4">
    <location>
        <begin position="136"/>
        <end position="145"/>
    </location>
</feature>
<feature type="compositionally biased region" description="Basic and acidic residues" evidence="4">
    <location>
        <begin position="152"/>
        <end position="194"/>
    </location>
</feature>
<feature type="compositionally biased region" description="Basic and acidic residues" evidence="4">
    <location>
        <begin position="204"/>
        <end position="250"/>
    </location>
</feature>
<feature type="compositionally biased region" description="Basic residues" evidence="4">
    <location>
        <begin position="267"/>
        <end position="297"/>
    </location>
</feature>
<feature type="compositionally biased region" description="Basic and acidic residues" evidence="4">
    <location>
        <begin position="368"/>
        <end position="382"/>
    </location>
</feature>
<feature type="compositionally biased region" description="Acidic residues" evidence="4">
    <location>
        <begin position="387"/>
        <end position="398"/>
    </location>
</feature>
<feature type="compositionally biased region" description="Basic and acidic residues" evidence="4">
    <location>
        <begin position="399"/>
        <end position="410"/>
    </location>
</feature>
<feature type="compositionally biased region" description="Basic residues" evidence="4">
    <location>
        <begin position="435"/>
        <end position="446"/>
    </location>
</feature>
<feature type="compositionally biased region" description="Basic and acidic residues" evidence="4">
    <location>
        <begin position="454"/>
        <end position="469"/>
    </location>
</feature>
<feature type="compositionally biased region" description="Basic and acidic residues" evidence="4">
    <location>
        <begin position="509"/>
        <end position="518"/>
    </location>
</feature>
<feature type="modified residue" description="Phosphoserine" evidence="2">
    <location>
        <position position="62"/>
    </location>
</feature>
<feature type="modified residue" description="Phosphoserine" evidence="2">
    <location>
        <position position="74"/>
    </location>
</feature>
<feature type="modified residue" description="Phosphoserine" evidence="6">
    <location>
        <position position="112"/>
    </location>
</feature>
<feature type="modified residue" description="Phosphoserine" evidence="6">
    <location>
        <position position="113"/>
    </location>
</feature>
<feature type="modified residue" description="Phosphoserine" evidence="6">
    <location>
        <position position="114"/>
    </location>
</feature>
<feature type="modified residue" description="Phosphoserine" evidence="6">
    <location>
        <position position="162"/>
    </location>
</feature>
<feature type="modified residue" description="Citrulline" evidence="1">
    <location>
        <position position="184"/>
    </location>
</feature>
<feature type="modified residue" description="Phosphoserine" evidence="6">
    <location>
        <position position="345"/>
    </location>
</feature>
<feature type="modified residue" description="Phosphoserine" evidence="6">
    <location>
        <position position="346"/>
    </location>
</feature>
<feature type="modified residue" description="Phosphoserine" evidence="3">
    <location>
        <position position="354"/>
    </location>
</feature>
<feature type="modified residue" description="Phosphoserine" evidence="2">
    <location>
        <position position="423"/>
    </location>
</feature>
<feature type="modified residue" description="Phosphoserine" evidence="2">
    <location>
        <position position="425"/>
    </location>
</feature>
<feature type="modified residue" description="Phosphoserine" evidence="2">
    <location>
        <position position="427"/>
    </location>
</feature>
<feature type="modified residue" description="Phosphoserine" evidence="2">
    <location>
        <position position="449"/>
    </location>
</feature>
<feature type="modified residue" description="Phosphoserine" evidence="2">
    <location>
        <position position="453"/>
    </location>
</feature>
<feature type="cross-link" description="Glycyl lysine isopeptide (Lys-Gly) (interchain with G-Cter in SUMO2)" evidence="2">
    <location>
        <position position="105"/>
    </location>
</feature>
<feature type="non-terminal residue">
    <location>
        <position position="1"/>
    </location>
</feature>
<feature type="non-terminal residue">
    <location>
        <position position="527"/>
    </location>
</feature>
<evidence type="ECO:0000250" key="1"/>
<evidence type="ECO:0000250" key="2">
    <source>
        <dbReference type="UniProtKB" id="P46100"/>
    </source>
</evidence>
<evidence type="ECO:0000250" key="3">
    <source>
        <dbReference type="UniProtKB" id="Q61687"/>
    </source>
</evidence>
<evidence type="ECO:0000256" key="4">
    <source>
        <dbReference type="SAM" id="MobiDB-lite"/>
    </source>
</evidence>
<evidence type="ECO:0000305" key="5"/>
<evidence type="ECO:0007744" key="6">
    <source>
    </source>
</evidence>
<proteinExistence type="evidence at protein level"/>
<dbReference type="EC" id="3.6.4.12"/>
<dbReference type="EMBL" id="D64059">
    <property type="protein sequence ID" value="BAA10936.1"/>
    <property type="molecule type" value="mRNA"/>
</dbReference>
<dbReference type="IntAct" id="P70486">
    <property type="interactions" value="1"/>
</dbReference>
<dbReference type="STRING" id="10116.ENSRNOP00000070457"/>
<dbReference type="iPTMnet" id="P70486"/>
<dbReference type="PhosphoSitePlus" id="P70486"/>
<dbReference type="jPOST" id="P70486"/>
<dbReference type="UCSC" id="RGD:619795">
    <property type="organism name" value="rat"/>
</dbReference>
<dbReference type="AGR" id="RGD:619795"/>
<dbReference type="RGD" id="619795">
    <property type="gene designation" value="Atrx"/>
</dbReference>
<dbReference type="InParanoid" id="P70486"/>
<dbReference type="Proteomes" id="UP000002494">
    <property type="component" value="Unplaced"/>
</dbReference>
<dbReference type="GO" id="GO:0099115">
    <property type="term" value="C:chromosome, subtelomeric region"/>
    <property type="evidence" value="ECO:0000266"/>
    <property type="project" value="RGD"/>
</dbReference>
<dbReference type="GO" id="GO:0000781">
    <property type="term" value="C:chromosome, telomeric region"/>
    <property type="evidence" value="ECO:0000250"/>
    <property type="project" value="UniProtKB"/>
</dbReference>
<dbReference type="GO" id="GO:0000779">
    <property type="term" value="C:condensed chromosome, centromeric region"/>
    <property type="evidence" value="ECO:0000266"/>
    <property type="project" value="RGD"/>
</dbReference>
<dbReference type="GO" id="GO:0000792">
    <property type="term" value="C:heterochromatin"/>
    <property type="evidence" value="ECO:0000266"/>
    <property type="project" value="RGD"/>
</dbReference>
<dbReference type="GO" id="GO:0000228">
    <property type="term" value="C:nuclear chromosome"/>
    <property type="evidence" value="ECO:0000266"/>
    <property type="project" value="RGD"/>
</dbReference>
<dbReference type="GO" id="GO:0005634">
    <property type="term" value="C:nucleus"/>
    <property type="evidence" value="ECO:0000266"/>
    <property type="project" value="RGD"/>
</dbReference>
<dbReference type="GO" id="GO:0005721">
    <property type="term" value="C:pericentric heterochromatin"/>
    <property type="evidence" value="ECO:0000266"/>
    <property type="project" value="RGD"/>
</dbReference>
<dbReference type="GO" id="GO:0016605">
    <property type="term" value="C:PML body"/>
    <property type="evidence" value="ECO:0000266"/>
    <property type="project" value="RGD"/>
</dbReference>
<dbReference type="GO" id="GO:0005524">
    <property type="term" value="F:ATP binding"/>
    <property type="evidence" value="ECO:0007669"/>
    <property type="project" value="UniProtKB-KW"/>
</dbReference>
<dbReference type="GO" id="GO:0016887">
    <property type="term" value="F:ATP hydrolysis activity"/>
    <property type="evidence" value="ECO:0007669"/>
    <property type="project" value="RHEA"/>
</dbReference>
<dbReference type="GO" id="GO:0003682">
    <property type="term" value="F:chromatin binding"/>
    <property type="evidence" value="ECO:0000250"/>
    <property type="project" value="UniProtKB"/>
</dbReference>
<dbReference type="GO" id="GO:0070087">
    <property type="term" value="F:chromo shadow domain binding"/>
    <property type="evidence" value="ECO:0000266"/>
    <property type="project" value="RGD"/>
</dbReference>
<dbReference type="GO" id="GO:0003677">
    <property type="term" value="F:DNA binding"/>
    <property type="evidence" value="ECO:0007669"/>
    <property type="project" value="UniProtKB-KW"/>
</dbReference>
<dbReference type="GO" id="GO:0015616">
    <property type="term" value="F:DNA translocase activity"/>
    <property type="evidence" value="ECO:0000266"/>
    <property type="project" value="RGD"/>
</dbReference>
<dbReference type="GO" id="GO:0004386">
    <property type="term" value="F:helicase activity"/>
    <property type="evidence" value="ECO:0007669"/>
    <property type="project" value="UniProtKB-KW"/>
</dbReference>
<dbReference type="GO" id="GO:0042393">
    <property type="term" value="F:histone binding"/>
    <property type="evidence" value="ECO:0000250"/>
    <property type="project" value="UniProtKB"/>
</dbReference>
<dbReference type="GO" id="GO:0035064">
    <property type="term" value="F:methylated histone binding"/>
    <property type="evidence" value="ECO:0000266"/>
    <property type="project" value="RGD"/>
</dbReference>
<dbReference type="GO" id="GO:0072711">
    <property type="term" value="P:cellular response to hydroxyurea"/>
    <property type="evidence" value="ECO:0000250"/>
    <property type="project" value="UniProtKB"/>
</dbReference>
<dbReference type="GO" id="GO:0006325">
    <property type="term" value="P:chromatin organization"/>
    <property type="evidence" value="ECO:0000250"/>
    <property type="project" value="UniProtKB"/>
</dbReference>
<dbReference type="GO" id="GO:0006338">
    <property type="term" value="P:chromatin remodeling"/>
    <property type="evidence" value="ECO:0000250"/>
    <property type="project" value="UniProtKB"/>
</dbReference>
<dbReference type="GO" id="GO:0070192">
    <property type="term" value="P:chromosome organization involved in meiotic cell cycle"/>
    <property type="evidence" value="ECO:0000266"/>
    <property type="project" value="RGD"/>
</dbReference>
<dbReference type="GO" id="GO:0030330">
    <property type="term" value="P:DNA damage response, signal transduction by p53 class mediator"/>
    <property type="evidence" value="ECO:0000250"/>
    <property type="project" value="UniProtKB"/>
</dbReference>
<dbReference type="GO" id="GO:0006281">
    <property type="term" value="P:DNA repair"/>
    <property type="evidence" value="ECO:0007669"/>
    <property type="project" value="UniProtKB-KW"/>
</dbReference>
<dbReference type="GO" id="GO:0030900">
    <property type="term" value="P:forebrain development"/>
    <property type="evidence" value="ECO:0000266"/>
    <property type="project" value="RGD"/>
</dbReference>
<dbReference type="GO" id="GO:0000212">
    <property type="term" value="P:meiotic spindle organization"/>
    <property type="evidence" value="ECO:0000266"/>
    <property type="project" value="RGD"/>
</dbReference>
<dbReference type="GO" id="GO:0035264">
    <property type="term" value="P:multicellular organism growth"/>
    <property type="evidence" value="ECO:0000266"/>
    <property type="project" value="RGD"/>
</dbReference>
<dbReference type="GO" id="GO:1904908">
    <property type="term" value="P:negative regulation of maintenance of mitotic sister chromatid cohesion, telomeric"/>
    <property type="evidence" value="ECO:0000266"/>
    <property type="project" value="RGD"/>
</dbReference>
<dbReference type="GO" id="GO:0006334">
    <property type="term" value="P:nucleosome assembly"/>
    <property type="evidence" value="ECO:0000250"/>
    <property type="project" value="UniProtKB"/>
</dbReference>
<dbReference type="GO" id="GO:0010571">
    <property type="term" value="P:positive regulation of nuclear cell cycle DNA replication"/>
    <property type="evidence" value="ECO:0000250"/>
    <property type="project" value="UniProtKB"/>
</dbReference>
<dbReference type="GO" id="GO:0032206">
    <property type="term" value="P:positive regulation of telomere maintenance"/>
    <property type="evidence" value="ECO:0000250"/>
    <property type="project" value="UniProtKB"/>
</dbReference>
<dbReference type="GO" id="GO:0045944">
    <property type="term" value="P:positive regulation of transcription by RNA polymerase II"/>
    <property type="evidence" value="ECO:0000250"/>
    <property type="project" value="UniProtKB"/>
</dbReference>
<dbReference type="GO" id="GO:0035128">
    <property type="term" value="P:post-embryonic forelimb morphogenesis"/>
    <property type="evidence" value="ECO:0000266"/>
    <property type="project" value="RGD"/>
</dbReference>
<dbReference type="GO" id="GO:0070198">
    <property type="term" value="P:protein localization to chromosome, telomeric region"/>
    <property type="evidence" value="ECO:0000266"/>
    <property type="project" value="RGD"/>
</dbReference>
<dbReference type="GO" id="GO:0031297">
    <property type="term" value="P:replication fork processing"/>
    <property type="evidence" value="ECO:0000250"/>
    <property type="project" value="UniProtKB"/>
</dbReference>
<dbReference type="GO" id="GO:0072520">
    <property type="term" value="P:seminiferous tubule development"/>
    <property type="evidence" value="ECO:0000266"/>
    <property type="project" value="RGD"/>
</dbReference>
<dbReference type="GO" id="GO:0060009">
    <property type="term" value="P:Sertoli cell development"/>
    <property type="evidence" value="ECO:0000266"/>
    <property type="project" value="RGD"/>
</dbReference>
<dbReference type="GO" id="GO:0007283">
    <property type="term" value="P:spermatogenesis"/>
    <property type="evidence" value="ECO:0000266"/>
    <property type="project" value="RGD"/>
</dbReference>
<dbReference type="GO" id="GO:0031509">
    <property type="term" value="P:subtelomeric heterochromatin formation"/>
    <property type="evidence" value="ECO:0000250"/>
    <property type="project" value="UniProtKB"/>
</dbReference>
<dbReference type="GO" id="GO:0006366">
    <property type="term" value="P:transcription by RNA polymerase II"/>
    <property type="evidence" value="ECO:0000266"/>
    <property type="project" value="RGD"/>
</dbReference>
<dbReference type="InterPro" id="IPR052131">
    <property type="entry name" value="ATRX_domain-containing"/>
</dbReference>
<dbReference type="PANTHER" id="PTHR46357">
    <property type="entry name" value="TRANSCRIPTIONAL REGULATOR ATRX"/>
    <property type="match status" value="1"/>
</dbReference>
<dbReference type="PANTHER" id="PTHR46357:SF1">
    <property type="entry name" value="TRANSCRIPTIONAL REGULATOR ATRX"/>
    <property type="match status" value="1"/>
</dbReference>
<name>ATRX_RAT</name>
<protein>
    <recommendedName>
        <fullName>Transcriptional regulator ATRX</fullName>
        <ecNumber>3.6.4.12</ecNumber>
    </recommendedName>
    <alternativeName>
        <fullName>ATP-dependent helicase ATRX</fullName>
    </alternativeName>
    <alternativeName>
        <fullName>X-linked nuclear protein</fullName>
    </alternativeName>
    <alternativeName>
        <fullName>pABP-2</fullName>
    </alternativeName>
</protein>
<reference key="1">
    <citation type="journal article" date="1996" name="J. Neurochem.">
        <title>Molecular cloning and characterization of annexin V-binding proteins with highly hydrophilic peptide structure.</title>
        <authorList>
            <person name="Ohsawa K."/>
            <person name="Imai Y."/>
            <person name="Ito D."/>
            <person name="Kohsaka S."/>
        </authorList>
    </citation>
    <scope>NUCLEOTIDE SEQUENCE [MRNA]</scope>
    <scope>CHARACTERIZATION</scope>
    <source>
        <strain>Wistar</strain>
        <tissue>Embryonic brain</tissue>
    </source>
</reference>
<reference key="2">
    <citation type="journal article" date="2012" name="Nat. Commun.">
        <title>Quantitative maps of protein phosphorylation sites across 14 different rat organs and tissues.</title>
        <authorList>
            <person name="Lundby A."/>
            <person name="Secher A."/>
            <person name="Lage K."/>
            <person name="Nordsborg N.B."/>
            <person name="Dmytriyev A."/>
            <person name="Lundby C."/>
            <person name="Olsen J.V."/>
        </authorList>
    </citation>
    <scope>PHOSPHORYLATION [LARGE SCALE ANALYSIS] AT SER-112; SER-113; SER-114; SER-162; SER-345 AND SER-346</scope>
    <scope>IDENTIFICATION BY MASS SPECTROMETRY [LARGE SCALE ANALYSIS]</scope>
</reference>
<keyword id="KW-0067">ATP-binding</keyword>
<keyword id="KW-0156">Chromatin regulator</keyword>
<keyword id="KW-0158">Chromosome</keyword>
<keyword id="KW-0164">Citrullination</keyword>
<keyword id="KW-0227">DNA damage</keyword>
<keyword id="KW-0234">DNA repair</keyword>
<keyword id="KW-0238">DNA-binding</keyword>
<keyword id="KW-0347">Helicase</keyword>
<keyword id="KW-0378">Hydrolase</keyword>
<keyword id="KW-1017">Isopeptide bond</keyword>
<keyword id="KW-0547">Nucleotide-binding</keyword>
<keyword id="KW-0539">Nucleus</keyword>
<keyword id="KW-0597">Phosphoprotein</keyword>
<keyword id="KW-1185">Reference proteome</keyword>
<keyword id="KW-0779">Telomere</keyword>
<keyword id="KW-0804">Transcription</keyword>
<keyword id="KW-0805">Transcription regulation</keyword>
<keyword id="KW-0832">Ubl conjugation</keyword>